<proteinExistence type="inferred from homology"/>
<comment type="function">
    <text evidence="1">Molecular chaperone capable of stabilizing a range of proteins. Seems to fulfill an ATP-independent, HSP70-like function in archaeal de novo protein folding (By similarity).</text>
</comment>
<comment type="subunit">
    <text evidence="1">Heterohexamer of two alpha and four beta subunits.</text>
</comment>
<comment type="subcellular location">
    <subcellularLocation>
        <location evidence="1">Cytoplasm</location>
    </subcellularLocation>
</comment>
<comment type="similarity">
    <text evidence="2">Belongs to the prefoldin subunit beta family.</text>
</comment>
<evidence type="ECO:0000250" key="1"/>
<evidence type="ECO:0000305" key="2"/>
<accession>Q975H2</accession>
<accession>F9VMY6</accession>
<reference key="1">
    <citation type="journal article" date="2001" name="DNA Res.">
        <title>Complete genome sequence of an aerobic thermoacidophilic Crenarchaeon, Sulfolobus tokodaii strain7.</title>
        <authorList>
            <person name="Kawarabayasi Y."/>
            <person name="Hino Y."/>
            <person name="Horikawa H."/>
            <person name="Jin-no K."/>
            <person name="Takahashi M."/>
            <person name="Sekine M."/>
            <person name="Baba S."/>
            <person name="Ankai A."/>
            <person name="Kosugi H."/>
            <person name="Hosoyama A."/>
            <person name="Fukui S."/>
            <person name="Nagai Y."/>
            <person name="Nishijima K."/>
            <person name="Otsuka R."/>
            <person name="Nakazawa H."/>
            <person name="Takamiya M."/>
            <person name="Kato Y."/>
            <person name="Yoshizawa T."/>
            <person name="Tanaka T."/>
            <person name="Kudoh Y."/>
            <person name="Yamazaki J."/>
            <person name="Kushida N."/>
            <person name="Oguchi A."/>
            <person name="Aoki K."/>
            <person name="Masuda S."/>
            <person name="Yanagii M."/>
            <person name="Nishimura M."/>
            <person name="Yamagishi A."/>
            <person name="Oshima T."/>
            <person name="Kikuchi H."/>
        </authorList>
    </citation>
    <scope>NUCLEOTIDE SEQUENCE [LARGE SCALE GENOMIC DNA]</scope>
    <source>
        <strain>DSM 16993 / JCM 10545 / NBRC 100140 / 7</strain>
    </source>
</reference>
<organism>
    <name type="scientific">Sulfurisphaera tokodaii (strain DSM 16993 / JCM 10545 / NBRC 100140 / 7)</name>
    <name type="common">Sulfolobus tokodaii</name>
    <dbReference type="NCBI Taxonomy" id="273063"/>
    <lineage>
        <taxon>Archaea</taxon>
        <taxon>Thermoproteota</taxon>
        <taxon>Thermoprotei</taxon>
        <taxon>Sulfolobales</taxon>
        <taxon>Sulfolobaceae</taxon>
        <taxon>Sulfurisphaera</taxon>
    </lineage>
</organism>
<protein>
    <recommendedName>
        <fullName>Prefoldin subunit beta</fullName>
    </recommendedName>
    <alternativeName>
        <fullName>GimC subunit beta</fullName>
    </alternativeName>
</protein>
<gene>
    <name type="primary">pfdB</name>
    <name type="ordered locus">STK_04400</name>
</gene>
<sequence>MTERIPPELQTQLVKLQQLQDQLNRLLTEKNVIDSELREVNKILQELSQLPAGTTVYKIVGNLLVKTDKETVQKELDDRKEILELRSRTYQKQENLLRTQLEDLQKKVNELLAKYYPQSGGAIKA</sequence>
<name>PFDB_SULTO</name>
<feature type="chain" id="PRO_0000124871" description="Prefoldin subunit beta">
    <location>
        <begin position="1"/>
        <end position="125"/>
    </location>
</feature>
<dbReference type="EMBL" id="BA000023">
    <property type="protein sequence ID" value="BAK54283.1"/>
    <property type="molecule type" value="Genomic_DNA"/>
</dbReference>
<dbReference type="RefSeq" id="WP_010978412.1">
    <property type="nucleotide sequence ID" value="NC_003106.2"/>
</dbReference>
<dbReference type="SMR" id="Q975H2"/>
<dbReference type="STRING" id="273063.STK_04400"/>
<dbReference type="GeneID" id="1458376"/>
<dbReference type="KEGG" id="sto:STK_04400"/>
<dbReference type="PATRIC" id="fig|273063.9.peg.510"/>
<dbReference type="eggNOG" id="arCOG01342">
    <property type="taxonomic scope" value="Archaea"/>
</dbReference>
<dbReference type="OrthoDB" id="204796at2157"/>
<dbReference type="Proteomes" id="UP000001015">
    <property type="component" value="Chromosome"/>
</dbReference>
<dbReference type="GO" id="GO:0005737">
    <property type="term" value="C:cytoplasm"/>
    <property type="evidence" value="ECO:0007669"/>
    <property type="project" value="UniProtKB-SubCell"/>
</dbReference>
<dbReference type="GO" id="GO:0016272">
    <property type="term" value="C:prefoldin complex"/>
    <property type="evidence" value="ECO:0007669"/>
    <property type="project" value="UniProtKB-UniRule"/>
</dbReference>
<dbReference type="GO" id="GO:0051087">
    <property type="term" value="F:protein-folding chaperone binding"/>
    <property type="evidence" value="ECO:0007669"/>
    <property type="project" value="TreeGrafter"/>
</dbReference>
<dbReference type="GO" id="GO:0051082">
    <property type="term" value="F:unfolded protein binding"/>
    <property type="evidence" value="ECO:0007669"/>
    <property type="project" value="UniProtKB-UniRule"/>
</dbReference>
<dbReference type="GO" id="GO:0051131">
    <property type="term" value="P:chaperone-mediated protein complex assembly"/>
    <property type="evidence" value="ECO:0007669"/>
    <property type="project" value="TreeGrafter"/>
</dbReference>
<dbReference type="GO" id="GO:0006457">
    <property type="term" value="P:protein folding"/>
    <property type="evidence" value="ECO:0007669"/>
    <property type="project" value="UniProtKB-UniRule"/>
</dbReference>
<dbReference type="CDD" id="cd23162">
    <property type="entry name" value="Prefoldin_beta_GimC"/>
    <property type="match status" value="1"/>
</dbReference>
<dbReference type="FunFam" id="1.10.287.370:FF:000013">
    <property type="entry name" value="Prefoldin subunit beta"/>
    <property type="match status" value="1"/>
</dbReference>
<dbReference type="Gene3D" id="1.10.287.370">
    <property type="match status" value="1"/>
</dbReference>
<dbReference type="HAMAP" id="MF_00307">
    <property type="entry name" value="PfdB"/>
    <property type="match status" value="1"/>
</dbReference>
<dbReference type="InterPro" id="IPR002777">
    <property type="entry name" value="PFD_beta-like"/>
</dbReference>
<dbReference type="InterPro" id="IPR012713">
    <property type="entry name" value="PfdB"/>
</dbReference>
<dbReference type="InterPro" id="IPR009053">
    <property type="entry name" value="Prefoldin"/>
</dbReference>
<dbReference type="NCBIfam" id="TIGR02338">
    <property type="entry name" value="gimC_beta"/>
    <property type="match status" value="1"/>
</dbReference>
<dbReference type="PANTHER" id="PTHR21431">
    <property type="entry name" value="PREFOLDIN SUBUNIT 6"/>
    <property type="match status" value="1"/>
</dbReference>
<dbReference type="PANTHER" id="PTHR21431:SF0">
    <property type="entry name" value="PREFOLDIN SUBUNIT 6"/>
    <property type="match status" value="1"/>
</dbReference>
<dbReference type="Pfam" id="PF01920">
    <property type="entry name" value="Prefoldin_2"/>
    <property type="match status" value="1"/>
</dbReference>
<dbReference type="SUPFAM" id="SSF46579">
    <property type="entry name" value="Prefoldin"/>
    <property type="match status" value="1"/>
</dbReference>
<keyword id="KW-0143">Chaperone</keyword>
<keyword id="KW-0963">Cytoplasm</keyword>
<keyword id="KW-1185">Reference proteome</keyword>